<name>HRCA_PARUW</name>
<proteinExistence type="inferred from homology"/>
<reference key="1">
    <citation type="journal article" date="2004" name="Science">
        <title>Illuminating the evolutionary history of chlamydiae.</title>
        <authorList>
            <person name="Horn M."/>
            <person name="Collingro A."/>
            <person name="Schmitz-Esser S."/>
            <person name="Beier C.L."/>
            <person name="Purkhold U."/>
            <person name="Fartmann B."/>
            <person name="Brandt P."/>
            <person name="Nyakatura G.J."/>
            <person name="Droege M."/>
            <person name="Frishman D."/>
            <person name="Rattei T."/>
            <person name="Mewes H.-W."/>
            <person name="Wagner M."/>
        </authorList>
    </citation>
    <scope>NUCLEOTIDE SEQUENCE [LARGE SCALE GENOMIC DNA]</scope>
    <source>
        <strain>UWE25</strain>
    </source>
</reference>
<keyword id="KW-1185">Reference proteome</keyword>
<keyword id="KW-0678">Repressor</keyword>
<keyword id="KW-0346">Stress response</keyword>
<keyword id="KW-0804">Transcription</keyword>
<keyword id="KW-0805">Transcription regulation</keyword>
<feature type="chain" id="PRO_0000182518" description="Heat-inducible transcription repressor HrcA">
    <location>
        <begin position="1"/>
        <end position="385"/>
    </location>
</feature>
<comment type="function">
    <text evidence="1">Negative regulator of class I heat shock genes (grpE-dnaK-dnaJ and groELS operons). Prevents heat-shock induction of these operons.</text>
</comment>
<comment type="similarity">
    <text evidence="1">Belongs to the HrcA family.</text>
</comment>
<gene>
    <name evidence="1" type="primary">hrcA</name>
    <name type="ordered locus">pc1497</name>
</gene>
<accession>Q6MB28</accession>
<protein>
    <recommendedName>
        <fullName evidence="1">Heat-inducible transcription repressor HrcA</fullName>
    </recommendedName>
</protein>
<organism>
    <name type="scientific">Protochlamydia amoebophila (strain UWE25)</name>
    <dbReference type="NCBI Taxonomy" id="264201"/>
    <lineage>
        <taxon>Bacteria</taxon>
        <taxon>Pseudomonadati</taxon>
        <taxon>Chlamydiota</taxon>
        <taxon>Chlamydiia</taxon>
        <taxon>Parachlamydiales</taxon>
        <taxon>Parachlamydiaceae</taxon>
        <taxon>Candidatus Protochlamydia</taxon>
    </lineage>
</organism>
<sequence length="385" mass="44392">MKIIKPTPIKRVGKHDRERRVLLGLVDYYIQTGKPVGSNTLKEAGFEDLSSATIRNYFAQLEEEGYLLQSHSSGGRIPTDLAYRIYAHAYLNTNEPYPKQNPFEAFKSFESKEIAIFLQEAAEKLSWETNCAVFLSAPRFDHDFIANLKLVPLDAYRCLCIIMTDFGVIKTEVMHLPVKLSSFGIKRIENYFHCRLTNLGEPENLEPEEETVAQTFYNELMLRYIVGYSNFIDVDLYRTGFSRLLFYSDFQDTNLLASSLSLFENAHSMRLLLKECKALNHLRFWIGDDLSSFANSSPRCSVLTIPYYINYKPVGAVGLLGPTRLPYRALFSLLKLFSDCISETVTKNVYKFKIDYRQPEQSLYLKKEESLLIGQSRFLIEDKRP</sequence>
<evidence type="ECO:0000255" key="1">
    <source>
        <dbReference type="HAMAP-Rule" id="MF_00081"/>
    </source>
</evidence>
<dbReference type="EMBL" id="BX908798">
    <property type="protein sequence ID" value="CAF24221.1"/>
    <property type="molecule type" value="Genomic_DNA"/>
</dbReference>
<dbReference type="RefSeq" id="WP_011176043.1">
    <property type="nucleotide sequence ID" value="NC_005861.2"/>
</dbReference>
<dbReference type="SMR" id="Q6MB28"/>
<dbReference type="STRING" id="264201.pc1497"/>
<dbReference type="KEGG" id="pcu:PC_RS07175"/>
<dbReference type="eggNOG" id="COG1420">
    <property type="taxonomic scope" value="Bacteria"/>
</dbReference>
<dbReference type="HOGENOM" id="CLU_050019_1_0_0"/>
<dbReference type="OrthoDB" id="9783139at2"/>
<dbReference type="Proteomes" id="UP000000529">
    <property type="component" value="Chromosome"/>
</dbReference>
<dbReference type="GO" id="GO:0003677">
    <property type="term" value="F:DNA binding"/>
    <property type="evidence" value="ECO:0007669"/>
    <property type="project" value="InterPro"/>
</dbReference>
<dbReference type="GO" id="GO:0045892">
    <property type="term" value="P:negative regulation of DNA-templated transcription"/>
    <property type="evidence" value="ECO:0007669"/>
    <property type="project" value="UniProtKB-UniRule"/>
</dbReference>
<dbReference type="Gene3D" id="3.30.450.40">
    <property type="match status" value="1"/>
</dbReference>
<dbReference type="Gene3D" id="1.10.10.10">
    <property type="entry name" value="Winged helix-like DNA-binding domain superfamily/Winged helix DNA-binding domain"/>
    <property type="match status" value="1"/>
</dbReference>
<dbReference type="HAMAP" id="MF_00081">
    <property type="entry name" value="HrcA"/>
    <property type="match status" value="1"/>
</dbReference>
<dbReference type="InterPro" id="IPR029016">
    <property type="entry name" value="GAF-like_dom_sf"/>
</dbReference>
<dbReference type="InterPro" id="IPR002571">
    <property type="entry name" value="HrcA"/>
</dbReference>
<dbReference type="InterPro" id="IPR021153">
    <property type="entry name" value="HrcA_C"/>
</dbReference>
<dbReference type="InterPro" id="IPR036388">
    <property type="entry name" value="WH-like_DNA-bd_sf"/>
</dbReference>
<dbReference type="InterPro" id="IPR036390">
    <property type="entry name" value="WH_DNA-bd_sf"/>
</dbReference>
<dbReference type="NCBIfam" id="TIGR00331">
    <property type="entry name" value="hrcA"/>
    <property type="match status" value="1"/>
</dbReference>
<dbReference type="PANTHER" id="PTHR34824">
    <property type="entry name" value="HEAT-INDUCIBLE TRANSCRIPTION REPRESSOR HRCA"/>
    <property type="match status" value="1"/>
</dbReference>
<dbReference type="PANTHER" id="PTHR34824:SF1">
    <property type="entry name" value="HEAT-INDUCIBLE TRANSCRIPTION REPRESSOR HRCA"/>
    <property type="match status" value="1"/>
</dbReference>
<dbReference type="Pfam" id="PF01628">
    <property type="entry name" value="HrcA"/>
    <property type="match status" value="1"/>
</dbReference>
<dbReference type="PIRSF" id="PIRSF005485">
    <property type="entry name" value="HrcA"/>
    <property type="match status" value="1"/>
</dbReference>
<dbReference type="SUPFAM" id="SSF55781">
    <property type="entry name" value="GAF domain-like"/>
    <property type="match status" value="1"/>
</dbReference>
<dbReference type="SUPFAM" id="SSF46785">
    <property type="entry name" value="Winged helix' DNA-binding domain"/>
    <property type="match status" value="1"/>
</dbReference>